<protein>
    <recommendedName>
        <fullName evidence="1">Putative 3-methyladenine DNA glycosylase</fullName>
        <ecNumber evidence="1">3.2.2.-</ecNumber>
    </recommendedName>
</protein>
<comment type="similarity">
    <text evidence="1">Belongs to the DNA glycosylase MPG family.</text>
</comment>
<organism>
    <name type="scientific">Staphylococcus aureus (strain USA300 / TCH1516)</name>
    <dbReference type="NCBI Taxonomy" id="451516"/>
    <lineage>
        <taxon>Bacteria</taxon>
        <taxon>Bacillati</taxon>
        <taxon>Bacillota</taxon>
        <taxon>Bacilli</taxon>
        <taxon>Bacillales</taxon>
        <taxon>Staphylococcaceae</taxon>
        <taxon>Staphylococcus</taxon>
    </lineage>
</organism>
<accession>A8Z534</accession>
<reference key="1">
    <citation type="journal article" date="2007" name="BMC Microbiol.">
        <title>Subtle genetic changes enhance virulence of methicillin resistant and sensitive Staphylococcus aureus.</title>
        <authorList>
            <person name="Highlander S.K."/>
            <person name="Hulten K.G."/>
            <person name="Qin X."/>
            <person name="Jiang H."/>
            <person name="Yerrapragada S."/>
            <person name="Mason E.O. Jr."/>
            <person name="Shang Y."/>
            <person name="Williams T.M."/>
            <person name="Fortunov R.M."/>
            <person name="Liu Y."/>
            <person name="Igboeli O."/>
            <person name="Petrosino J."/>
            <person name="Tirumalai M."/>
            <person name="Uzman A."/>
            <person name="Fox G.E."/>
            <person name="Cardenas A.M."/>
            <person name="Muzny D.M."/>
            <person name="Hemphill L."/>
            <person name="Ding Y."/>
            <person name="Dugan S."/>
            <person name="Blyth P.R."/>
            <person name="Buhay C.J."/>
            <person name="Dinh H.H."/>
            <person name="Hawes A.C."/>
            <person name="Holder M."/>
            <person name="Kovar C.L."/>
            <person name="Lee S.L."/>
            <person name="Liu W."/>
            <person name="Nazareth L.V."/>
            <person name="Wang Q."/>
            <person name="Zhou J."/>
            <person name="Kaplan S.L."/>
            <person name="Weinstock G.M."/>
        </authorList>
    </citation>
    <scope>NUCLEOTIDE SEQUENCE [LARGE SCALE GENOMIC DNA]</scope>
    <source>
        <strain>USA300 / TCH1516</strain>
    </source>
</reference>
<gene>
    <name type="ordered locus">USA300HOU_2325</name>
</gene>
<sequence>MDFVNNDTRQIAKNLLGVKVIYQDTTQTYTGYIVETEAYLGLNDRAAHGYGGKITPKVTSLYKRGGTIYAHVMHTHLLINFVTKSEGIPEGVLIRAIEPEEGLSAMFRNRGKKGYEVTNGPGKWTKAFNIPRAIDGATLNDCRLSIDTKNRKYPKDIIASPRIGIPNKGDWTHKSLRYTVKGNPFVSRMRKSDCMFPEDTWK</sequence>
<dbReference type="EC" id="3.2.2.-" evidence="1"/>
<dbReference type="EMBL" id="CP000730">
    <property type="protein sequence ID" value="ABX30317.1"/>
    <property type="molecule type" value="Genomic_DNA"/>
</dbReference>
<dbReference type="RefSeq" id="WP_000348300.1">
    <property type="nucleotide sequence ID" value="NC_010079.1"/>
</dbReference>
<dbReference type="SMR" id="A8Z534"/>
<dbReference type="KEGG" id="sax:USA300HOU_2325"/>
<dbReference type="HOGENOM" id="CLU_060471_2_0_9"/>
<dbReference type="BioCyc" id="SAUR451516-HMP:GTV5-2414-MONOMER"/>
<dbReference type="GO" id="GO:0003905">
    <property type="term" value="F:alkylbase DNA N-glycosylase activity"/>
    <property type="evidence" value="ECO:0007669"/>
    <property type="project" value="InterPro"/>
</dbReference>
<dbReference type="GO" id="GO:0003677">
    <property type="term" value="F:DNA binding"/>
    <property type="evidence" value="ECO:0007669"/>
    <property type="project" value="InterPro"/>
</dbReference>
<dbReference type="GO" id="GO:0006284">
    <property type="term" value="P:base-excision repair"/>
    <property type="evidence" value="ECO:0007669"/>
    <property type="project" value="InterPro"/>
</dbReference>
<dbReference type="CDD" id="cd00540">
    <property type="entry name" value="AAG"/>
    <property type="match status" value="1"/>
</dbReference>
<dbReference type="FunFam" id="3.10.300.10:FF:000001">
    <property type="entry name" value="Putative 3-methyladenine DNA glycosylase"/>
    <property type="match status" value="1"/>
</dbReference>
<dbReference type="Gene3D" id="3.10.300.10">
    <property type="entry name" value="Methylpurine-DNA glycosylase (MPG)"/>
    <property type="match status" value="1"/>
</dbReference>
<dbReference type="HAMAP" id="MF_00527">
    <property type="entry name" value="3MGH"/>
    <property type="match status" value="1"/>
</dbReference>
<dbReference type="InterPro" id="IPR011034">
    <property type="entry name" value="Formyl_transferase-like_C_sf"/>
</dbReference>
<dbReference type="InterPro" id="IPR003180">
    <property type="entry name" value="MPG"/>
</dbReference>
<dbReference type="InterPro" id="IPR036995">
    <property type="entry name" value="MPG_sf"/>
</dbReference>
<dbReference type="NCBIfam" id="TIGR00567">
    <property type="entry name" value="3mg"/>
    <property type="match status" value="1"/>
</dbReference>
<dbReference type="PANTHER" id="PTHR10429">
    <property type="entry name" value="DNA-3-METHYLADENINE GLYCOSYLASE"/>
    <property type="match status" value="1"/>
</dbReference>
<dbReference type="PANTHER" id="PTHR10429:SF0">
    <property type="entry name" value="DNA-3-METHYLADENINE GLYCOSYLASE"/>
    <property type="match status" value="1"/>
</dbReference>
<dbReference type="Pfam" id="PF02245">
    <property type="entry name" value="Pur_DNA_glyco"/>
    <property type="match status" value="1"/>
</dbReference>
<dbReference type="SUPFAM" id="SSF50486">
    <property type="entry name" value="FMT C-terminal domain-like"/>
    <property type="match status" value="1"/>
</dbReference>
<proteinExistence type="inferred from homology"/>
<feature type="chain" id="PRO_1000081706" description="Putative 3-methyladenine DNA glycosylase">
    <location>
        <begin position="1"/>
        <end position="202"/>
    </location>
</feature>
<evidence type="ECO:0000255" key="1">
    <source>
        <dbReference type="HAMAP-Rule" id="MF_00527"/>
    </source>
</evidence>
<name>3MGH_STAAT</name>
<keyword id="KW-0227">DNA damage</keyword>
<keyword id="KW-0234">DNA repair</keyword>
<keyword id="KW-0378">Hydrolase</keyword>